<organism>
    <name type="scientific">Hadronyche formidabilis</name>
    <name type="common">Northern tree funnel-web spider</name>
    <name type="synonym">Atrax formidabilis</name>
    <dbReference type="NCBI Taxonomy" id="426499"/>
    <lineage>
        <taxon>Eukaryota</taxon>
        <taxon>Metazoa</taxon>
        <taxon>Ecdysozoa</taxon>
        <taxon>Arthropoda</taxon>
        <taxon>Chelicerata</taxon>
        <taxon>Arachnida</taxon>
        <taxon>Araneae</taxon>
        <taxon>Mygalomorphae</taxon>
        <taxon>Hexathelidae</taxon>
        <taxon>Hadronyche</taxon>
    </lineage>
</organism>
<proteinExistence type="evidence at protein level"/>
<sequence length="37" mass="4087">SPTCIRSGQPCPYNENCCSQSCTFKTNENGNTVKRCD</sequence>
<comment type="function">
    <text evidence="1">Inhibits insect, but not mammalian, voltage-gated calcium channels (Cav).</text>
</comment>
<comment type="subcellular location">
    <subcellularLocation>
        <location>Secreted</location>
    </subcellularLocation>
</comment>
<comment type="tissue specificity">
    <text>Expressed by the venom gland.</text>
</comment>
<comment type="domain">
    <text evidence="1">The presence of a 'disulfide through disulfide knot' structurally defines this protein as a knottin.</text>
</comment>
<comment type="similarity">
    <text evidence="3">Belongs to the neurotoxin 08 (Shiva) family. 01 (omega toxin) subfamily.</text>
</comment>
<dbReference type="SMR" id="P0C2L4"/>
<dbReference type="ArachnoServer" id="AS000194">
    <property type="toxin name" value="omega-hexatoxin-Hf1a"/>
</dbReference>
<dbReference type="GO" id="GO:0005576">
    <property type="term" value="C:extracellular region"/>
    <property type="evidence" value="ECO:0007669"/>
    <property type="project" value="UniProtKB-SubCell"/>
</dbReference>
<dbReference type="GO" id="GO:0019855">
    <property type="term" value="F:calcium channel inhibitor activity"/>
    <property type="evidence" value="ECO:0007669"/>
    <property type="project" value="InterPro"/>
</dbReference>
<dbReference type="GO" id="GO:0090729">
    <property type="term" value="F:toxin activity"/>
    <property type="evidence" value="ECO:0007669"/>
    <property type="project" value="UniProtKB-KW"/>
</dbReference>
<dbReference type="GO" id="GO:0006952">
    <property type="term" value="P:defense response"/>
    <property type="evidence" value="ECO:0007669"/>
    <property type="project" value="InterPro"/>
</dbReference>
<dbReference type="InterPro" id="IPR009415">
    <property type="entry name" value="Omega-atracotox"/>
</dbReference>
<dbReference type="Pfam" id="PF06357">
    <property type="entry name" value="Omega-toxin"/>
    <property type="match status" value="1"/>
</dbReference>
<dbReference type="SUPFAM" id="SSF57059">
    <property type="entry name" value="omega toxin-like"/>
    <property type="match status" value="1"/>
</dbReference>
<accession>P0C2L4</accession>
<reference key="1">
    <citation type="patent" date="1998-06-09" number="US5763568">
        <title>Insecticidal toxins derived from funnel web (Atrax or Hadronyche) spiders.</title>
        <authorList>
            <person name="Atkinson R.K."/>
            <person name="Howden M.E.H."/>
            <person name="Tyler M.I."/>
            <person name="Vonarx E.J."/>
        </authorList>
    </citation>
    <scope>PROTEIN SEQUENCE</scope>
</reference>
<evidence type="ECO:0000250" key="1"/>
<evidence type="ECO:0000250" key="2">
    <source>
        <dbReference type="UniProtKB" id="P56207"/>
    </source>
</evidence>
<evidence type="ECO:0000305" key="3"/>
<protein>
    <recommendedName>
        <fullName>Omega-hexatoxin-Hf1a</fullName>
        <shortName>Omega-HXTX-Hf1a</shortName>
    </recommendedName>
    <alternativeName>
        <fullName>Omega-atracotoxin-Hf1a</fullName>
        <shortName>Omega-AcTx-Hf1a</shortName>
    </alternativeName>
</protein>
<name>TO1B_HADFO</name>
<keyword id="KW-0108">Calcium channel impairing toxin</keyword>
<keyword id="KW-0903">Direct protein sequencing</keyword>
<keyword id="KW-1015">Disulfide bond</keyword>
<keyword id="KW-0872">Ion channel impairing toxin</keyword>
<keyword id="KW-0960">Knottin</keyword>
<keyword id="KW-0528">Neurotoxin</keyword>
<keyword id="KW-0964">Secreted</keyword>
<keyword id="KW-0800">Toxin</keyword>
<keyword id="KW-1218">Voltage-gated calcium channel impairing toxin</keyword>
<feature type="peptide" id="PRO_0000280457" description="Omega-hexatoxin-Hf1a">
    <location>
        <begin position="1"/>
        <end position="37"/>
    </location>
</feature>
<feature type="site" description="Critical for insecticidal activity" evidence="2">
    <location>
        <position position="10"/>
    </location>
</feature>
<feature type="site" description="Critical for insecticidal activity" evidence="2">
    <location>
        <position position="27"/>
    </location>
</feature>
<feature type="site" description="Critical for insecticidal activity" evidence="2">
    <location>
        <position position="35"/>
    </location>
</feature>
<feature type="disulfide bond" evidence="2">
    <location>
        <begin position="4"/>
        <end position="18"/>
    </location>
</feature>
<feature type="disulfide bond" evidence="2">
    <location>
        <begin position="11"/>
        <end position="22"/>
    </location>
</feature>
<feature type="disulfide bond" evidence="2">
    <location>
        <begin position="17"/>
        <end position="36"/>
    </location>
</feature>